<accession>P79621</accession>
<accession>O46787</accession>
<accession>O78036</accession>
<accession>O78109</accession>
<accession>Q31115</accession>
<accession>Q9TPP1</accession>
<comment type="function">
    <text evidence="1 4 5">Essential for transcriptional activity of the HLA class II promoter; activation is via the proximal promoter (PubMed:37327784). Does not bind DNA (By similarity). May act in a coactivator-like fashion through protein-protein interactions by contacting factors binding to the proximal MHC class II promoter, to elements of the transcription machinery, or both (By similarity). Alternatively it may activate HLA class II transcription by modifying proteins that bind to the MHC class II promoter (By similarity). Also mediates enhanced MHC class I transcription, the promoter element requirements for CIITA-mediated transcription are distinct from those of constitutive MHC class I transcription, and CIITA can functionally replace TAF1 at these genes (By similarity). Activates CD74 transcription (PubMed:32855215). Exhibits intrinsic GTP-stimulated acetyltransferase activity (By similarity). Exhibits serine/threonine protein kinase activity: phosphorylates the TFIID component TAF7, the RAP74 subunit of the general transcription factor TFIIF, histone H2B at 'Ser-37' and other histones (By similarity).</text>
</comment>
<comment type="catalytic activity">
    <reaction evidence="1">
        <text>L-seryl-[protein] + ATP = O-phospho-L-seryl-[protein] + ADP + H(+)</text>
        <dbReference type="Rhea" id="RHEA:17989"/>
        <dbReference type="Rhea" id="RHEA-COMP:9863"/>
        <dbReference type="Rhea" id="RHEA-COMP:11604"/>
        <dbReference type="ChEBI" id="CHEBI:15378"/>
        <dbReference type="ChEBI" id="CHEBI:29999"/>
        <dbReference type="ChEBI" id="CHEBI:30616"/>
        <dbReference type="ChEBI" id="CHEBI:83421"/>
        <dbReference type="ChEBI" id="CHEBI:456216"/>
        <dbReference type="EC" id="2.7.11.1"/>
    </reaction>
</comment>
<comment type="catalytic activity">
    <reaction evidence="1">
        <text>L-threonyl-[protein] + ATP = O-phospho-L-threonyl-[protein] + ADP + H(+)</text>
        <dbReference type="Rhea" id="RHEA:46608"/>
        <dbReference type="Rhea" id="RHEA-COMP:11060"/>
        <dbReference type="Rhea" id="RHEA-COMP:11605"/>
        <dbReference type="ChEBI" id="CHEBI:15378"/>
        <dbReference type="ChEBI" id="CHEBI:30013"/>
        <dbReference type="ChEBI" id="CHEBI:30616"/>
        <dbReference type="ChEBI" id="CHEBI:61977"/>
        <dbReference type="ChEBI" id="CHEBI:456216"/>
        <dbReference type="EC" id="2.7.11.1"/>
    </reaction>
</comment>
<comment type="subunit">
    <text evidence="1">Interacts with ZXDA and ZXDC. Interacts with PML (isoform PML-2). Interacts with TAF7; interaction inhibits CIITA acetyltransferase activity, thereby repressing transcription.</text>
</comment>
<comment type="interaction">
    <interactant intactId="EBI-26668013">
        <id>P79621</id>
    </interactant>
    <interactant intactId="EBI-6554737">
        <id>Q07279</id>
        <label>Nfe2</label>
    </interactant>
    <organismsDiffer>false</organismsDiffer>
    <experiments>2</experiments>
</comment>
<comment type="subcellular location">
    <subcellularLocation>
        <location evidence="1">Nucleus</location>
    </subcellularLocation>
    <subcellularLocation>
        <location evidence="1">Nucleus</location>
        <location evidence="1">PML body</location>
    </subcellularLocation>
    <text evidence="1">Recruited to PML body by PML.</text>
</comment>
<comment type="alternative products">
    <event type="alternative splicing"/>
    <isoform>
        <id>P79621-1</id>
        <name>1</name>
        <name>I</name>
        <sequence type="displayed"/>
    </isoform>
    <isoform>
        <id>P79621-2</id>
        <name>2</name>
        <name>III</name>
        <sequence type="described" ref="VSP_007214 VSP_007215"/>
    </isoform>
    <isoform>
        <id>P79621-3</id>
        <name>3</name>
        <name>IV</name>
        <sequence type="described" ref="VSP_007216"/>
    </isoform>
</comment>
<comment type="tissue specificity">
    <molecule>Isoform 1</molecule>
    <text evidence="6">Expressed at very high levels in dendritic cells, at very low levels in spleen and thymus and is not detected in other tissues.</text>
</comment>
<comment type="tissue specificity">
    <molecule>Isoform 2</molecule>
    <text evidence="6">Detected at high levels in spleen and tonsil as well as in a number of B-lymphocyte cell lines, and at very low levels in dendritic cells.</text>
</comment>
<comment type="induction">
    <text evidence="4 5 6">By IFNG and LPS (PubMed:32855215, PubMed:9184229). By STAT1 in the upper small intestine (PubMed:37327784).</text>
</comment>
<comment type="domain">
    <text evidence="1">The acetyltransferase domain is necessary for activation of both class I and class II transcription.</text>
</comment>
<comment type="domain">
    <text evidence="1">The GTP-binding motif doesn't confer GTPase activity but promotes nuclear localization.</text>
</comment>
<comment type="PTM">
    <text evidence="1">Autophosphorylated, affecting interaction with TAF7.</text>
</comment>
<reference key="1">
    <citation type="journal article" date="1997" name="EMBO J.">
        <title>Expression of MHC class II molecules in different cellular and functional compartments is controlled by differential usage of multiple promoters of the transactivator CIITA.</title>
        <authorList>
            <person name="Muhlethaler-Mottet A."/>
            <person name="Otten L.A."/>
            <person name="Steimle V."/>
            <person name="Mach B."/>
        </authorList>
    </citation>
    <scope>NUCLEOTIDE SEQUENCE [GENOMIC DNA / MRNA] (ISOFORMS 1; 2 AND 3)</scope>
    <scope>TISSUE SPECIFICITY</scope>
    <scope>INDUCTION</scope>
    <source>
        <strain>BALB/cJ</strain>
    </source>
</reference>
<reference key="2">
    <citation type="journal article" date="1997" name="Immunogenetics">
        <title>Mouse class II transactivator: cDNA sequence and amino acid comparison with the human class II transactivator.</title>
        <authorList>
            <person name="Sims T.N."/>
            <person name="Elliott J.F."/>
            <person name="Ramassar V."/>
            <person name="Denney D.W. Jr."/>
            <person name="Halloran P.F."/>
        </authorList>
    </citation>
    <scope>NUCLEOTIDE SEQUENCE [MRNA] (ISOFORM 2)</scope>
    <source>
        <strain>NOD</strain>
        <tissue>Spleen</tissue>
    </source>
</reference>
<reference key="3">
    <citation type="journal article" date="1996" name="Cancer Immunol. Immunother.">
        <title>Interferon gamma (IFNgamma) gene transfer of an EMT6 tumor that is poorly responsive to IFNgamma stimulation: increase in tumor immunogenicity is accompanied by induction of a mouse class II transactivator and class II MHC.</title>
        <authorList>
            <person name="Panelli M.C."/>
            <person name="Wang E."/>
            <person name="Shen S."/>
            <person name="Schluter S.F."/>
            <person name="Bernstein R.M."/>
            <person name="Hersh E.M."/>
            <person name="Stopeck A."/>
            <person name="Gangavalli R."/>
            <person name="Barber J."/>
            <person name="Jolly D."/>
            <person name="Akporiaye E.T."/>
        </authorList>
    </citation>
    <scope>NUCLEOTIDE SEQUENCE [MRNA] OF 955-1097</scope>
    <source>
        <strain>BALB/cJ</strain>
        <tissue>Thymus</tissue>
    </source>
</reference>
<reference key="4">
    <citation type="journal article" date="2020" name="Science">
        <title>MHC class II transactivator CIITA induces cell resistance to Ebola virus and SARS-like coronaviruses.</title>
        <authorList>
            <person name="Bruchez A."/>
            <person name="Sha K."/>
            <person name="Johnson J."/>
            <person name="Chen L."/>
            <person name="Stefani C."/>
            <person name="McConnell H."/>
            <person name="Gaucherand L."/>
            <person name="Prins R."/>
            <person name="Matreyek K.A."/>
            <person name="Hume A.J."/>
            <person name="Muehlberger E."/>
            <person name="Schmidt E.V."/>
            <person name="Olinger G.G."/>
            <person name="Stuart L.M."/>
            <person name="Lacy-Hulbert A."/>
        </authorList>
    </citation>
    <scope>INDUCTION BY LPS</scope>
    <scope>FUNCTION</scope>
</reference>
<reference key="5">
    <citation type="journal article" date="2023" name="Cell">
        <title>Gasdermin D licenses MHCII induction to maintain food tolerance in small intestine.</title>
        <authorList>
            <person name="He K."/>
            <person name="Wan T."/>
            <person name="Wang D."/>
            <person name="Hu J."/>
            <person name="Zhou T."/>
            <person name="Tao W."/>
            <person name="Wei Z."/>
            <person name="Lu Q."/>
            <person name="Zhou R."/>
            <person name="Tian Z."/>
            <person name="Flavell R.A."/>
            <person name="Zhu S."/>
        </authorList>
    </citation>
    <scope>INDUCTION BY STAT1</scope>
    <scope>FUNCTION</scope>
</reference>
<gene>
    <name evidence="10" type="primary">Ciita</name>
    <name type="synonym">C2ta</name>
    <name type="synonym">Mhc2ta</name>
</gene>
<sequence>MNHFQAILAQVQTLLSSQKPRQVRALLDGLLEEELLSREYHCALLHEPDGDALARKISLTLLEKGDLDLTFLSWVCNSLQAPTVERGTSYRDHGDHSLCATMDLGSPEGSYLELLNSDADPLHLYHLYDQMDLAGEEEIELSSEPDTDTINCDQFSKLLQDMELDEETREAYANIAELDQYVFQDTQLEGLSKDLFIEHIGAEEGFGENIEIPVEAGQKPQKRRFPEEHAMDSKHRKLVPTSRTSLNYLDLPTGHIQIFTTLPQGLWQISGAGTGLSSVLIYHGEMPQVNQVLPSSSLSIPSLPESPDRPGSTSPFTPSAADLPSMPEPALTSRVNETEDTSPSPCQEGPESSIKLPKWPEAVERFQHSLQDKYKALPQSPRGPLVAVELVRARLERGSNKSQERELATPDWTERQLAHGGLAEVLQVVSDCRRPGETQVVAVLGKAGQGKSHWARTVSHTWACGQLLQYDFVFYVPCHCLDRPGDTYHLRDLLCPPSLQPLAMDDEVLDYIVRQPDRVLLILDAFEELEAQDGLLHGPCGSLSPEPCSLRGLLAGIFQRKLLRGCTLLLTARPRGRLAQSLSKADAIFEVPSFSTKQAKTYMRHYFENSGTAGNQDKALGLLEGQPLLCSYSHSPVVCRAVCQLSKALLEQGTEAQLPCTLTGLYVSLLGPAAQNSPPGALVELAKLAWELGRRHQSTLQETRFSSVEVKTWAVTQGLMQQTLETTEAQLAFSSFLLQCFLGAVWLAQCNEIKDKELPQYLALTPRKKRPYDNWLEGVPRFLAGLVFQPRAHCLGALVEPAVAAVADRKQKVLTRYLKRLKLGTLRAGRLLELLHCAHETQQPGIWEHVAHQLPGHLSFLGTRLTPPDVYVLGRALETASQDFSLDLRQTGVEPSGLGNLVGLSCVTSFRASLSDTMALWESLQQQGEAQLLQAAEEKFTIEPFKAKSPKDVEDLDRLVQTQRLRNPSEDAAKDLPAIRDLKKLEFALGPILGPQAFPTLAKILPAFSSLQHLDLDSLSENKIGDKGVSKLSATFPQLKALETLNLSQNNITDVGACKLAEALPALAKSLLRLSLYNNCICDKGAKSLAQVLPDMVSLRVMDVQFNKFTAAGAQQLASSLQKCPQVETLAMWTPTIPFGVQEHLQQLDARISLR</sequence>
<dbReference type="EC" id="2.3.1.-" evidence="1"/>
<dbReference type="EC" id="2.7.11.1" evidence="1"/>
<dbReference type="EMBL" id="AF000006">
    <property type="protein sequence ID" value="AAB92364.2"/>
    <property type="molecule type" value="Genomic_DNA"/>
</dbReference>
<dbReference type="EMBL" id="AF000007">
    <property type="protein sequence ID" value="AAB92365.1"/>
    <property type="molecule type" value="Genomic_DNA"/>
</dbReference>
<dbReference type="EMBL" id="AF042158">
    <property type="protein sequence ID" value="AAC34366.1"/>
    <property type="molecule type" value="mRNA"/>
</dbReference>
<dbReference type="EMBL" id="AF042159">
    <property type="protein sequence ID" value="AAC34367.1"/>
    <property type="molecule type" value="mRNA"/>
</dbReference>
<dbReference type="EMBL" id="AF100709">
    <property type="protein sequence ID" value="AAF06838.1"/>
    <property type="molecule type" value="mRNA"/>
</dbReference>
<dbReference type="EMBL" id="AF100710">
    <property type="protein sequence ID" value="AAF06839.1"/>
    <property type="molecule type" value="mRNA"/>
</dbReference>
<dbReference type="EMBL" id="U60653">
    <property type="protein sequence ID" value="AAB48859.1"/>
    <property type="molecule type" value="mRNA"/>
</dbReference>
<dbReference type="EMBL" id="U46562">
    <property type="protein sequence ID" value="AAB05004.1"/>
    <property type="molecule type" value="mRNA"/>
</dbReference>
<dbReference type="CCDS" id="CCDS27950.1">
    <molecule id="P79621-2"/>
</dbReference>
<dbReference type="CCDS" id="CCDS88875.1">
    <molecule id="P79621-1"/>
</dbReference>
<dbReference type="CCDS" id="CCDS88877.1">
    <molecule id="P79621-3"/>
</dbReference>
<dbReference type="RefSeq" id="NP_001230690.1">
    <property type="nucleotide sequence ID" value="NM_001243761.2"/>
</dbReference>
<dbReference type="RefSeq" id="NP_001289547.1">
    <molecule id="P79621-1"/>
    <property type="nucleotide sequence ID" value="NM_001302618.1"/>
</dbReference>
<dbReference type="RefSeq" id="NP_001289548.1">
    <molecule id="P79621-3"/>
    <property type="nucleotide sequence ID" value="NM_001302619.1"/>
</dbReference>
<dbReference type="RefSeq" id="NP_031601.1">
    <molecule id="P79621-2"/>
    <property type="nucleotide sequence ID" value="NM_007575.4"/>
</dbReference>
<dbReference type="RefSeq" id="XP_006521788.1">
    <property type="nucleotide sequence ID" value="XM_006521725.3"/>
</dbReference>
<dbReference type="RefSeq" id="XP_011244112.1">
    <molecule id="P79621-3"/>
    <property type="nucleotide sequence ID" value="XM_011245810.4"/>
</dbReference>
<dbReference type="RefSeq" id="XP_036015649.1">
    <molecule id="P79621-3"/>
    <property type="nucleotide sequence ID" value="XM_036159756.1"/>
</dbReference>
<dbReference type="SMR" id="P79621"/>
<dbReference type="BioGRID" id="198417">
    <property type="interactions" value="11"/>
</dbReference>
<dbReference type="FunCoup" id="P79621">
    <property type="interactions" value="762"/>
</dbReference>
<dbReference type="IntAct" id="P79621">
    <property type="interactions" value="8"/>
</dbReference>
<dbReference type="STRING" id="10090.ENSMUSP00000023147"/>
<dbReference type="iPTMnet" id="P79621"/>
<dbReference type="PhosphoSitePlus" id="P79621"/>
<dbReference type="SwissPalm" id="P79621"/>
<dbReference type="PaxDb" id="10090-ENSMUSP00000023147"/>
<dbReference type="ProteomicsDB" id="265408">
    <molecule id="P79621-1"/>
</dbReference>
<dbReference type="ProteomicsDB" id="265409">
    <molecule id="P79621-2"/>
</dbReference>
<dbReference type="ProteomicsDB" id="265410">
    <molecule id="P79621-3"/>
</dbReference>
<dbReference type="Antibodypedia" id="4234">
    <property type="antibodies" value="184 antibodies from 36 providers"/>
</dbReference>
<dbReference type="DNASU" id="12265"/>
<dbReference type="Ensembl" id="ENSMUST00000023147.8">
    <molecule id="P79621-2"/>
    <property type="protein sequence ID" value="ENSMUSP00000023147.7"/>
    <property type="gene ID" value="ENSMUSG00000022504.11"/>
</dbReference>
<dbReference type="Ensembl" id="ENSMUST00000230395.2">
    <molecule id="P79621-1"/>
    <property type="protein sequence ID" value="ENSMUSP00000155517.2"/>
    <property type="gene ID" value="ENSMUSG00000022504.11"/>
</dbReference>
<dbReference type="Ensembl" id="ENSMUST00000230450.2">
    <molecule id="P79621-3"/>
    <property type="protein sequence ID" value="ENSMUSP00000155002.2"/>
    <property type="gene ID" value="ENSMUSG00000022504.11"/>
</dbReference>
<dbReference type="GeneID" id="12265"/>
<dbReference type="KEGG" id="mmu:12265"/>
<dbReference type="UCSC" id="uc007ydr.2">
    <molecule id="P79621-1"/>
    <property type="organism name" value="mouse"/>
</dbReference>
<dbReference type="AGR" id="MGI:108445"/>
<dbReference type="CTD" id="4261"/>
<dbReference type="MGI" id="MGI:108445">
    <property type="gene designation" value="Ciita"/>
</dbReference>
<dbReference type="VEuPathDB" id="HostDB:ENSMUSG00000022504"/>
<dbReference type="eggNOG" id="KOG4308">
    <property type="taxonomic scope" value="Eukaryota"/>
</dbReference>
<dbReference type="GeneTree" id="ENSGT00940000161578"/>
<dbReference type="HOGENOM" id="CLU_010691_1_0_1"/>
<dbReference type="InParanoid" id="P79621"/>
<dbReference type="OMA" id="PFAFPRH"/>
<dbReference type="OrthoDB" id="120976at2759"/>
<dbReference type="PhylomeDB" id="P79621"/>
<dbReference type="TreeFam" id="TF352118"/>
<dbReference type="BioGRID-ORCS" id="12265">
    <property type="hits" value="4 hits in 81 CRISPR screens"/>
</dbReference>
<dbReference type="ChiTaRS" id="Ciita">
    <property type="organism name" value="mouse"/>
</dbReference>
<dbReference type="PRO" id="PR:P79621"/>
<dbReference type="Proteomes" id="UP000000589">
    <property type="component" value="Chromosome 16"/>
</dbReference>
<dbReference type="RNAct" id="P79621">
    <property type="molecule type" value="protein"/>
</dbReference>
<dbReference type="Bgee" id="ENSMUSG00000022504">
    <property type="expression patterns" value="Expressed in mesenteric lymph node and 70 other cell types or tissues"/>
</dbReference>
<dbReference type="ExpressionAtlas" id="P79621">
    <property type="expression patterns" value="baseline and differential"/>
</dbReference>
<dbReference type="GO" id="GO:0009986">
    <property type="term" value="C:cell surface"/>
    <property type="evidence" value="ECO:0007669"/>
    <property type="project" value="Ensembl"/>
</dbReference>
<dbReference type="GO" id="GO:0005829">
    <property type="term" value="C:cytosol"/>
    <property type="evidence" value="ECO:0007669"/>
    <property type="project" value="Ensembl"/>
</dbReference>
<dbReference type="GO" id="GO:0016605">
    <property type="term" value="C:PML body"/>
    <property type="evidence" value="ECO:0000250"/>
    <property type="project" value="UniProtKB"/>
</dbReference>
<dbReference type="GO" id="GO:0016746">
    <property type="term" value="F:acyltransferase activity"/>
    <property type="evidence" value="ECO:0007669"/>
    <property type="project" value="UniProtKB-KW"/>
</dbReference>
<dbReference type="GO" id="GO:0005524">
    <property type="term" value="F:ATP binding"/>
    <property type="evidence" value="ECO:0007669"/>
    <property type="project" value="UniProtKB-KW"/>
</dbReference>
<dbReference type="GO" id="GO:0005525">
    <property type="term" value="F:GTP binding"/>
    <property type="evidence" value="ECO:0007669"/>
    <property type="project" value="UniProtKB-KW"/>
</dbReference>
<dbReference type="GO" id="GO:0106310">
    <property type="term" value="F:protein serine kinase activity"/>
    <property type="evidence" value="ECO:0007669"/>
    <property type="project" value="RHEA"/>
</dbReference>
<dbReference type="GO" id="GO:0004674">
    <property type="term" value="F:protein serine/threonine kinase activity"/>
    <property type="evidence" value="ECO:0007669"/>
    <property type="project" value="UniProtKB-EC"/>
</dbReference>
<dbReference type="GO" id="GO:0044877">
    <property type="term" value="F:protein-containing complex binding"/>
    <property type="evidence" value="ECO:0000250"/>
    <property type="project" value="UniProtKB"/>
</dbReference>
<dbReference type="GO" id="GO:0071257">
    <property type="term" value="P:cellular response to electrical stimulus"/>
    <property type="evidence" value="ECO:0007669"/>
    <property type="project" value="Ensembl"/>
</dbReference>
<dbReference type="GO" id="GO:0071360">
    <property type="term" value="P:cellular response to exogenous dsRNA"/>
    <property type="evidence" value="ECO:0007669"/>
    <property type="project" value="Ensembl"/>
</dbReference>
<dbReference type="GO" id="GO:0071346">
    <property type="term" value="P:cellular response to type II interferon"/>
    <property type="evidence" value="ECO:0007669"/>
    <property type="project" value="Ensembl"/>
</dbReference>
<dbReference type="GO" id="GO:0045892">
    <property type="term" value="P:negative regulation of DNA-templated transcription"/>
    <property type="evidence" value="ECO:0000315"/>
    <property type="project" value="MGI"/>
</dbReference>
<dbReference type="GO" id="GO:0000122">
    <property type="term" value="P:negative regulation of transcription by RNA polymerase II"/>
    <property type="evidence" value="ECO:0007669"/>
    <property type="project" value="Ensembl"/>
</dbReference>
<dbReference type="GO" id="GO:0045348">
    <property type="term" value="P:positive regulation of MHC class II biosynthetic process"/>
    <property type="evidence" value="ECO:0007669"/>
    <property type="project" value="Ensembl"/>
</dbReference>
<dbReference type="GO" id="GO:0045944">
    <property type="term" value="P:positive regulation of transcription by RNA polymerase II"/>
    <property type="evidence" value="ECO:0000314"/>
    <property type="project" value="UniProtKB"/>
</dbReference>
<dbReference type="GO" id="GO:0046677">
    <property type="term" value="P:response to antibiotic"/>
    <property type="evidence" value="ECO:0000266"/>
    <property type="project" value="MGI"/>
</dbReference>
<dbReference type="GO" id="GO:0034341">
    <property type="term" value="P:response to type II interferon"/>
    <property type="evidence" value="ECO:0000314"/>
    <property type="project" value="UniProtKB"/>
</dbReference>
<dbReference type="CDD" id="cd00116">
    <property type="entry name" value="LRR_RI"/>
    <property type="match status" value="1"/>
</dbReference>
<dbReference type="FunFam" id="3.40.50.300:FF:001028">
    <property type="entry name" value="Class II major histocompatibility complex transactivator"/>
    <property type="match status" value="1"/>
</dbReference>
<dbReference type="FunFam" id="3.80.10.10:FF:000157">
    <property type="entry name" value="Class II major histocompatibility complex transactivator"/>
    <property type="match status" value="1"/>
</dbReference>
<dbReference type="Gene3D" id="3.40.50.300">
    <property type="entry name" value="P-loop containing nucleotide triphosphate hydrolases"/>
    <property type="match status" value="1"/>
</dbReference>
<dbReference type="Gene3D" id="3.80.10.10">
    <property type="entry name" value="Ribonuclease Inhibitor"/>
    <property type="match status" value="2"/>
</dbReference>
<dbReference type="InterPro" id="IPR001611">
    <property type="entry name" value="Leu-rich_rpt"/>
</dbReference>
<dbReference type="InterPro" id="IPR032675">
    <property type="entry name" value="LRR_dom_sf"/>
</dbReference>
<dbReference type="InterPro" id="IPR008095">
    <property type="entry name" value="MHC_II_transact"/>
</dbReference>
<dbReference type="InterPro" id="IPR007111">
    <property type="entry name" value="NACHT_NTPase"/>
</dbReference>
<dbReference type="InterPro" id="IPR027417">
    <property type="entry name" value="P-loop_NTPase"/>
</dbReference>
<dbReference type="PANTHER" id="PTHR47189">
    <property type="entry name" value="MHC CLASS II TRANSACTIVATOR"/>
    <property type="match status" value="1"/>
</dbReference>
<dbReference type="PANTHER" id="PTHR47189:SF1">
    <property type="entry name" value="MHC CLASS II TRANSACTIVATOR"/>
    <property type="match status" value="1"/>
</dbReference>
<dbReference type="Pfam" id="PF13516">
    <property type="entry name" value="LRR_6"/>
    <property type="match status" value="2"/>
</dbReference>
<dbReference type="Pfam" id="PF05729">
    <property type="entry name" value="NACHT"/>
    <property type="match status" value="1"/>
</dbReference>
<dbReference type="PRINTS" id="PR01719">
    <property type="entry name" value="MHCIIACTVATR"/>
</dbReference>
<dbReference type="SMART" id="SM00368">
    <property type="entry name" value="LRR_RI"/>
    <property type="match status" value="4"/>
</dbReference>
<dbReference type="SUPFAM" id="SSF52540">
    <property type="entry name" value="P-loop containing nucleoside triphosphate hydrolases"/>
    <property type="match status" value="1"/>
</dbReference>
<dbReference type="SUPFAM" id="SSF52047">
    <property type="entry name" value="RNI-like"/>
    <property type="match status" value="1"/>
</dbReference>
<dbReference type="PROSITE" id="PS50837">
    <property type="entry name" value="NACHT"/>
    <property type="match status" value="1"/>
</dbReference>
<feature type="chain" id="PRO_0000089242" description="MHC class II transactivator">
    <location>
        <begin position="1"/>
        <end position="1155"/>
    </location>
</feature>
<feature type="domain" description="NACHT" evidence="2">
    <location>
        <begin position="439"/>
        <end position="749"/>
    </location>
</feature>
<feature type="repeat" description="LRR 1">
    <location>
        <begin position="1010"/>
        <end position="1033"/>
    </location>
</feature>
<feature type="repeat" description="LRR 2">
    <location>
        <begin position="1041"/>
        <end position="1062"/>
    </location>
</feature>
<feature type="repeat" description="LRR 3">
    <location>
        <begin position="1070"/>
        <end position="1091"/>
    </location>
</feature>
<feature type="repeat" description="LRR 4">
    <location>
        <begin position="1098"/>
        <end position="1119"/>
    </location>
</feature>
<feature type="region of interest" description="Required for acetyltransferase activity" evidence="1">
    <location>
        <begin position="171"/>
        <end position="210"/>
    </location>
</feature>
<feature type="region of interest" description="Disordered" evidence="3">
    <location>
        <begin position="217"/>
        <end position="237"/>
    </location>
</feature>
<feature type="region of interest" description="Disordered" evidence="3">
    <location>
        <begin position="297"/>
        <end position="357"/>
    </location>
</feature>
<feature type="compositionally biased region" description="Basic and acidic residues" evidence="3">
    <location>
        <begin position="224"/>
        <end position="233"/>
    </location>
</feature>
<feature type="binding site" evidence="1">
    <location>
        <begin position="445"/>
        <end position="452"/>
    </location>
    <ligand>
        <name>GTP</name>
        <dbReference type="ChEBI" id="CHEBI:37565"/>
    </ligand>
</feature>
<feature type="splice variant" id="VSP_007216" description="In isoform 3." evidence="8">
    <location>
        <begin position="1"/>
        <end position="101"/>
    </location>
</feature>
<feature type="splice variant" id="VSP_007214" description="In isoform 2." evidence="7 8">
    <location>
        <begin position="1"/>
        <end position="77"/>
    </location>
</feature>
<feature type="splice variant" id="VSP_007215" description="In isoform 2." evidence="7 8">
    <original>SLQAPTVERGTSYRDHG</original>
    <variation>MRCLVPGPSGSYLPELQ</variation>
    <location>
        <begin position="78"/>
        <end position="94"/>
    </location>
</feature>
<feature type="sequence conflict" description="In Ref. 3; AAB05004." evidence="9" ref="3">
    <original>G</original>
    <variation>R</variation>
    <location>
        <position position="994"/>
    </location>
</feature>
<keyword id="KW-0010">Activator</keyword>
<keyword id="KW-0012">Acyltransferase</keyword>
<keyword id="KW-0025">Alternative splicing</keyword>
<keyword id="KW-0067">ATP-binding</keyword>
<keyword id="KW-0342">GTP-binding</keyword>
<keyword id="KW-0418">Kinase</keyword>
<keyword id="KW-0433">Leucine-rich repeat</keyword>
<keyword id="KW-0547">Nucleotide-binding</keyword>
<keyword id="KW-0539">Nucleus</keyword>
<keyword id="KW-0597">Phosphoprotein</keyword>
<keyword id="KW-1185">Reference proteome</keyword>
<keyword id="KW-0677">Repeat</keyword>
<keyword id="KW-0804">Transcription</keyword>
<keyword id="KW-0805">Transcription regulation</keyword>
<keyword id="KW-0808">Transferase</keyword>
<protein>
    <recommendedName>
        <fullName evidence="9">MHC class II transactivator</fullName>
        <shortName>CIITA</shortName>
        <ecNumber evidence="1">2.3.1.-</ecNumber>
        <ecNumber evidence="1">2.7.11.1</ecNumber>
    </recommendedName>
</protein>
<name>C2TA_MOUSE</name>
<proteinExistence type="evidence at protein level"/>
<evidence type="ECO:0000250" key="1">
    <source>
        <dbReference type="UniProtKB" id="P33076"/>
    </source>
</evidence>
<evidence type="ECO:0000255" key="2">
    <source>
        <dbReference type="PROSITE-ProRule" id="PRU00136"/>
    </source>
</evidence>
<evidence type="ECO:0000256" key="3">
    <source>
        <dbReference type="SAM" id="MobiDB-lite"/>
    </source>
</evidence>
<evidence type="ECO:0000269" key="4">
    <source>
    </source>
</evidence>
<evidence type="ECO:0000269" key="5">
    <source>
    </source>
</evidence>
<evidence type="ECO:0000269" key="6">
    <source>
    </source>
</evidence>
<evidence type="ECO:0000303" key="7">
    <source>
    </source>
</evidence>
<evidence type="ECO:0000303" key="8">
    <source>
    </source>
</evidence>
<evidence type="ECO:0000305" key="9"/>
<evidence type="ECO:0000312" key="10">
    <source>
        <dbReference type="MGI" id="MGI:108445"/>
    </source>
</evidence>
<organism>
    <name type="scientific">Mus musculus</name>
    <name type="common">Mouse</name>
    <dbReference type="NCBI Taxonomy" id="10090"/>
    <lineage>
        <taxon>Eukaryota</taxon>
        <taxon>Metazoa</taxon>
        <taxon>Chordata</taxon>
        <taxon>Craniata</taxon>
        <taxon>Vertebrata</taxon>
        <taxon>Euteleostomi</taxon>
        <taxon>Mammalia</taxon>
        <taxon>Eutheria</taxon>
        <taxon>Euarchontoglires</taxon>
        <taxon>Glires</taxon>
        <taxon>Rodentia</taxon>
        <taxon>Myomorpha</taxon>
        <taxon>Muroidea</taxon>
        <taxon>Muridae</taxon>
        <taxon>Murinae</taxon>
        <taxon>Mus</taxon>
        <taxon>Mus</taxon>
    </lineage>
</organism>